<feature type="chain" id="PRO_0000151004" description="ORC1-type DNA replication protein 1">
    <location>
        <begin position="1"/>
        <end position="414"/>
    </location>
</feature>
<feature type="binding site" evidence="1">
    <location>
        <begin position="70"/>
        <end position="74"/>
    </location>
    <ligand>
        <name>ATP</name>
        <dbReference type="ChEBI" id="CHEBI:30616"/>
    </ligand>
</feature>
<feature type="binding site" evidence="1">
    <location>
        <position position="213"/>
    </location>
    <ligand>
        <name>ATP</name>
        <dbReference type="ChEBI" id="CHEBI:30616"/>
    </ligand>
</feature>
<feature type="binding site" evidence="1">
    <location>
        <position position="225"/>
    </location>
    <ligand>
        <name>ATP</name>
        <dbReference type="ChEBI" id="CHEBI:30616"/>
    </ligand>
</feature>
<proteinExistence type="inferred from homology"/>
<protein>
    <recommendedName>
        <fullName evidence="1">ORC1-type DNA replication protein 1</fullName>
    </recommendedName>
</protein>
<organism>
    <name type="scientific">Methanosarcina mazei (strain ATCC BAA-159 / DSM 3647 / Goe1 / Go1 / JCM 11833 / OCM 88)</name>
    <name type="common">Methanosarcina frisia</name>
    <dbReference type="NCBI Taxonomy" id="192952"/>
    <lineage>
        <taxon>Archaea</taxon>
        <taxon>Methanobacteriati</taxon>
        <taxon>Methanobacteriota</taxon>
        <taxon>Stenosarchaea group</taxon>
        <taxon>Methanomicrobia</taxon>
        <taxon>Methanosarcinales</taxon>
        <taxon>Methanosarcinaceae</taxon>
        <taxon>Methanosarcina</taxon>
    </lineage>
</organism>
<reference key="1">
    <citation type="journal article" date="2002" name="J. Mol. Microbiol. Biotechnol.">
        <title>The genome of Methanosarcina mazei: evidence for lateral gene transfer between Bacteria and Archaea.</title>
        <authorList>
            <person name="Deppenmeier U."/>
            <person name="Johann A."/>
            <person name="Hartsch T."/>
            <person name="Merkl R."/>
            <person name="Schmitz R.A."/>
            <person name="Martinez-Arias R."/>
            <person name="Henne A."/>
            <person name="Wiezer A."/>
            <person name="Baeumer S."/>
            <person name="Jacobi C."/>
            <person name="Brueggemann H."/>
            <person name="Lienard T."/>
            <person name="Christmann A."/>
            <person name="Boemecke M."/>
            <person name="Steckel S."/>
            <person name="Bhattacharyya A."/>
            <person name="Lykidis A."/>
            <person name="Overbeek R."/>
            <person name="Klenk H.-P."/>
            <person name="Gunsalus R.P."/>
            <person name="Fritz H.-J."/>
            <person name="Gottschalk G."/>
        </authorList>
    </citation>
    <scope>NUCLEOTIDE SEQUENCE [LARGE SCALE GENOMIC DNA]</scope>
    <source>
        <strain>ATCC BAA-159 / DSM 3647 / Goe1 / Go1 / JCM 11833 / OCM 88</strain>
    </source>
</reference>
<accession>Q8PXA8</accession>
<evidence type="ECO:0000255" key="1">
    <source>
        <dbReference type="HAMAP-Rule" id="MF_01407"/>
    </source>
</evidence>
<dbReference type="EMBL" id="AE008384">
    <property type="protein sequence ID" value="AAM31010.1"/>
    <property type="molecule type" value="Genomic_DNA"/>
</dbReference>
<dbReference type="RefSeq" id="WP_011033260.1">
    <property type="nucleotide sequence ID" value="NC_003901.1"/>
</dbReference>
<dbReference type="SMR" id="Q8PXA8"/>
<dbReference type="KEGG" id="mma:MM_1314"/>
<dbReference type="PATRIC" id="fig|192952.21.peg.1526"/>
<dbReference type="eggNOG" id="arCOG00467">
    <property type="taxonomic scope" value="Archaea"/>
</dbReference>
<dbReference type="HOGENOM" id="CLU_025112_3_1_2"/>
<dbReference type="Proteomes" id="UP000000595">
    <property type="component" value="Chromosome"/>
</dbReference>
<dbReference type="GO" id="GO:0005524">
    <property type="term" value="F:ATP binding"/>
    <property type="evidence" value="ECO:0007669"/>
    <property type="project" value="UniProtKB-UniRule"/>
</dbReference>
<dbReference type="GO" id="GO:0016887">
    <property type="term" value="F:ATP hydrolysis activity"/>
    <property type="evidence" value="ECO:0007669"/>
    <property type="project" value="InterPro"/>
</dbReference>
<dbReference type="GO" id="GO:0006260">
    <property type="term" value="P:DNA replication"/>
    <property type="evidence" value="ECO:0007669"/>
    <property type="project" value="UniProtKB-UniRule"/>
</dbReference>
<dbReference type="CDD" id="cd00009">
    <property type="entry name" value="AAA"/>
    <property type="match status" value="1"/>
</dbReference>
<dbReference type="CDD" id="cd08768">
    <property type="entry name" value="Cdc6_C"/>
    <property type="match status" value="1"/>
</dbReference>
<dbReference type="FunFam" id="1.10.10.10:FF:000502">
    <property type="entry name" value="ORC1-type DNA replication protein"/>
    <property type="match status" value="1"/>
</dbReference>
<dbReference type="FunFam" id="1.10.8.60:FF:000073">
    <property type="entry name" value="ORC1-type DNA replication protein"/>
    <property type="match status" value="1"/>
</dbReference>
<dbReference type="FunFam" id="3.40.50.300:FF:000930">
    <property type="entry name" value="ORC1-type DNA replication protein"/>
    <property type="match status" value="1"/>
</dbReference>
<dbReference type="Gene3D" id="1.10.8.60">
    <property type="match status" value="1"/>
</dbReference>
<dbReference type="Gene3D" id="3.40.50.300">
    <property type="entry name" value="P-loop containing nucleotide triphosphate hydrolases"/>
    <property type="match status" value="1"/>
</dbReference>
<dbReference type="Gene3D" id="1.10.10.10">
    <property type="entry name" value="Winged helix-like DNA-binding domain superfamily/Winged helix DNA-binding domain"/>
    <property type="match status" value="1"/>
</dbReference>
<dbReference type="HAMAP" id="MF_01407">
    <property type="entry name" value="ORC1_type_DNA_replic_protein"/>
    <property type="match status" value="1"/>
</dbReference>
<dbReference type="InterPro" id="IPR003593">
    <property type="entry name" value="AAA+_ATPase"/>
</dbReference>
<dbReference type="InterPro" id="IPR049945">
    <property type="entry name" value="AAA_22"/>
</dbReference>
<dbReference type="InterPro" id="IPR015163">
    <property type="entry name" value="Cdc6_C"/>
</dbReference>
<dbReference type="InterPro" id="IPR055237">
    <property type="entry name" value="Cdc6_lid"/>
</dbReference>
<dbReference type="InterPro" id="IPR050311">
    <property type="entry name" value="ORC1/CDC6"/>
</dbReference>
<dbReference type="InterPro" id="IPR014277">
    <property type="entry name" value="Orc1/Cdc6_arc"/>
</dbReference>
<dbReference type="InterPro" id="IPR027417">
    <property type="entry name" value="P-loop_NTPase"/>
</dbReference>
<dbReference type="InterPro" id="IPR036388">
    <property type="entry name" value="WH-like_DNA-bd_sf"/>
</dbReference>
<dbReference type="InterPro" id="IPR036390">
    <property type="entry name" value="WH_DNA-bd_sf"/>
</dbReference>
<dbReference type="NCBIfam" id="TIGR02928">
    <property type="entry name" value="orc1/cdc6 family replication initiation protein"/>
    <property type="match status" value="1"/>
</dbReference>
<dbReference type="NCBIfam" id="NF001625">
    <property type="entry name" value="PRK00411.1-3"/>
    <property type="match status" value="1"/>
</dbReference>
<dbReference type="PANTHER" id="PTHR10763">
    <property type="entry name" value="CELL DIVISION CONTROL PROTEIN 6-RELATED"/>
    <property type="match status" value="1"/>
</dbReference>
<dbReference type="PANTHER" id="PTHR10763:SF22">
    <property type="entry name" value="ORC1-TYPE DNA REPLICATION PROTEIN"/>
    <property type="match status" value="1"/>
</dbReference>
<dbReference type="Pfam" id="PF13401">
    <property type="entry name" value="AAA_22"/>
    <property type="match status" value="1"/>
</dbReference>
<dbReference type="Pfam" id="PF09079">
    <property type="entry name" value="Cdc6_C"/>
    <property type="match status" value="1"/>
</dbReference>
<dbReference type="Pfam" id="PF22703">
    <property type="entry name" value="Cdc6_lid"/>
    <property type="match status" value="1"/>
</dbReference>
<dbReference type="SMART" id="SM00382">
    <property type="entry name" value="AAA"/>
    <property type="match status" value="1"/>
</dbReference>
<dbReference type="SMART" id="SM01074">
    <property type="entry name" value="Cdc6_C"/>
    <property type="match status" value="1"/>
</dbReference>
<dbReference type="SUPFAM" id="SSF52540">
    <property type="entry name" value="P-loop containing nucleoside triphosphate hydrolases"/>
    <property type="match status" value="1"/>
</dbReference>
<dbReference type="SUPFAM" id="SSF46785">
    <property type="entry name" value="Winged helix' DNA-binding domain"/>
    <property type="match status" value="1"/>
</dbReference>
<sequence>MIKAQSLDGLFEKLLDGKSIFKNKEVLRPSYTPDLLLHRNDQINSLATILVSALRGETPSNVLIYGKTGTGKTAVTRYVGKELERVSEDKSIFCSVVYINCEVIDTQYRLLANLARHFEEEVPMTGWPTDQVFMKFKEAIDSREQVIIIILDEIDKLIKKGDDVLYNLSRINTDLRKAKVSMIGVSNDLKFTEFLDPRVKSSLGEEELIFPPYDAEQISDILKQRAKMAYNDGVLGEMVIPLCAAFAAQEHGDARRALDLLRVSGEIAERENQPQVLEEHVRRAQEKIEIDRVVEVVRTLPTQSKLVLYSIILLRNRGREGKNVTTGEMYNVYRQLCHHIDVDILTQRRVTDLMSELDMLGIVNAVVVSKGRYGRTKEISLSVPVENTRKVLLEDYRLKPLVDFKASVFNKMFS</sequence>
<comment type="function">
    <text evidence="1">Involved in regulation of DNA replication.</text>
</comment>
<comment type="similarity">
    <text evidence="1">Belongs to the CDC6/cdc18 family.</text>
</comment>
<gene>
    <name type="primary">cdc6-1</name>
    <name type="ordered locus">MM_1314</name>
</gene>
<keyword id="KW-0067">ATP-binding</keyword>
<keyword id="KW-0235">DNA replication</keyword>
<keyword id="KW-0547">Nucleotide-binding</keyword>
<name>CDC61_METMA</name>